<protein>
    <recommendedName>
        <fullName evidence="1">Aspartate--tRNA(Asp/Asn) ligase</fullName>
        <ecNumber evidence="1">6.1.1.23</ecNumber>
    </recommendedName>
    <alternativeName>
        <fullName evidence="1">Aspartyl-tRNA synthetase</fullName>
        <shortName evidence="1">AspRS</shortName>
    </alternativeName>
    <alternativeName>
        <fullName evidence="1">Non-discriminating aspartyl-tRNA synthetase</fullName>
        <shortName evidence="1">ND-AspRS</shortName>
    </alternativeName>
</protein>
<gene>
    <name evidence="1" type="primary">aspS</name>
    <name type="ordered locus">RD1_1176</name>
</gene>
<reference key="1">
    <citation type="journal article" date="2007" name="J. Bacteriol.">
        <title>The complete genome sequence of Roseobacter denitrificans reveals a mixotrophic rather than photosynthetic metabolism.</title>
        <authorList>
            <person name="Swingley W.D."/>
            <person name="Sadekar S."/>
            <person name="Mastrian S.D."/>
            <person name="Matthies H.J."/>
            <person name="Hao J."/>
            <person name="Ramos H."/>
            <person name="Acharya C.R."/>
            <person name="Conrad A.L."/>
            <person name="Taylor H.L."/>
            <person name="Dejesa L.C."/>
            <person name="Shah M.K."/>
            <person name="O'Huallachain M.E."/>
            <person name="Lince M.T."/>
            <person name="Blankenship R.E."/>
            <person name="Beatty J.T."/>
            <person name="Touchman J.W."/>
        </authorList>
    </citation>
    <scope>NUCLEOTIDE SEQUENCE [LARGE SCALE GENOMIC DNA]</scope>
    <source>
        <strain>ATCC 33942 / OCh 114</strain>
    </source>
</reference>
<sequence>MHMYRSHTCADLSAQDVGKTVRLSGWVHRVRDHGGVLFIDLRDHYGITQVLCDPDSPVFEQMEQVRAEWCIRVDGVVKARDASLINPKISTGEIELFVKDLEVLGASEELPLQVFGDQEYPEETRLKYRYLDLRRANMQANMKLRSDVVASLRQQMWKADFREFQTPIITASSPEGARDFLVPSRLHPGRFYALPQAPQQFKQLLMVSGFDKYFQIAPCFRDEDPRADRSPTDFYQLDIEMSFVTQQDVFDVIQPVLTQVFEQFGNGKAVDQEWPQISYKDAALWYGSDKPDLRNPIKMQSVSEHFAGSGFAIFANLLEQEGTEIRAIPAPGGGSRKFCDRMNAFAQKEGLPGMGYIFWRDQGAGMEAAGPLAKNIGPERTEAIRQQLGLGVGDAAFFLGGKPKAFETVAGKARNHIGMELGLTDQNRFAFAWIVDFPIYEKDSETGRIDFEHNPFSMPQGGLEALQGDPLSVVGYQYDLSCNGYELVSGAIRNHKPEIMFKAFEIAGYGEDEVRKRFGGMVNAFQYGAPPHGGCAAGIDRIVMLLAEEANIREVILFPMNQRAEDLMMSAPSEPESEQLMELGLRVIPKD</sequence>
<dbReference type="EC" id="6.1.1.23" evidence="1"/>
<dbReference type="EMBL" id="CP000362">
    <property type="protein sequence ID" value="ABG30827.1"/>
    <property type="molecule type" value="Genomic_DNA"/>
</dbReference>
<dbReference type="RefSeq" id="WP_011567447.1">
    <property type="nucleotide sequence ID" value="NC_008209.1"/>
</dbReference>
<dbReference type="SMR" id="Q16B16"/>
<dbReference type="STRING" id="375451.RD1_1176"/>
<dbReference type="KEGG" id="rde:RD1_1176"/>
<dbReference type="eggNOG" id="COG0173">
    <property type="taxonomic scope" value="Bacteria"/>
</dbReference>
<dbReference type="HOGENOM" id="CLU_014330_3_2_5"/>
<dbReference type="OrthoDB" id="9802326at2"/>
<dbReference type="Proteomes" id="UP000007029">
    <property type="component" value="Chromosome"/>
</dbReference>
<dbReference type="GO" id="GO:0005737">
    <property type="term" value="C:cytoplasm"/>
    <property type="evidence" value="ECO:0007669"/>
    <property type="project" value="UniProtKB-SubCell"/>
</dbReference>
<dbReference type="GO" id="GO:0004815">
    <property type="term" value="F:aspartate-tRNA ligase activity"/>
    <property type="evidence" value="ECO:0007669"/>
    <property type="project" value="UniProtKB-UniRule"/>
</dbReference>
<dbReference type="GO" id="GO:0050560">
    <property type="term" value="F:aspartate-tRNA(Asn) ligase activity"/>
    <property type="evidence" value="ECO:0007669"/>
    <property type="project" value="UniProtKB-EC"/>
</dbReference>
<dbReference type="GO" id="GO:0005524">
    <property type="term" value="F:ATP binding"/>
    <property type="evidence" value="ECO:0007669"/>
    <property type="project" value="UniProtKB-UniRule"/>
</dbReference>
<dbReference type="GO" id="GO:0003676">
    <property type="term" value="F:nucleic acid binding"/>
    <property type="evidence" value="ECO:0007669"/>
    <property type="project" value="InterPro"/>
</dbReference>
<dbReference type="GO" id="GO:0006422">
    <property type="term" value="P:aspartyl-tRNA aminoacylation"/>
    <property type="evidence" value="ECO:0007669"/>
    <property type="project" value="UniProtKB-UniRule"/>
</dbReference>
<dbReference type="CDD" id="cd04317">
    <property type="entry name" value="EcAspRS_like_N"/>
    <property type="match status" value="1"/>
</dbReference>
<dbReference type="Gene3D" id="3.30.930.10">
    <property type="entry name" value="Bira Bifunctional Protein, Domain 2"/>
    <property type="match status" value="1"/>
</dbReference>
<dbReference type="Gene3D" id="3.30.1360.30">
    <property type="entry name" value="GAD-like domain"/>
    <property type="match status" value="1"/>
</dbReference>
<dbReference type="Gene3D" id="2.40.50.140">
    <property type="entry name" value="Nucleic acid-binding proteins"/>
    <property type="match status" value="1"/>
</dbReference>
<dbReference type="HAMAP" id="MF_00044">
    <property type="entry name" value="Asp_tRNA_synth_type1"/>
    <property type="match status" value="1"/>
</dbReference>
<dbReference type="InterPro" id="IPR004364">
    <property type="entry name" value="Aa-tRNA-synt_II"/>
</dbReference>
<dbReference type="InterPro" id="IPR006195">
    <property type="entry name" value="aa-tRNA-synth_II"/>
</dbReference>
<dbReference type="InterPro" id="IPR045864">
    <property type="entry name" value="aa-tRNA-synth_II/BPL/LPL"/>
</dbReference>
<dbReference type="InterPro" id="IPR004524">
    <property type="entry name" value="Asp-tRNA-ligase_1"/>
</dbReference>
<dbReference type="InterPro" id="IPR047089">
    <property type="entry name" value="Asp-tRNA-ligase_1_N"/>
</dbReference>
<dbReference type="InterPro" id="IPR002312">
    <property type="entry name" value="Asp/Asn-tRNA-synth_IIb"/>
</dbReference>
<dbReference type="InterPro" id="IPR004115">
    <property type="entry name" value="GAD-like_sf"/>
</dbReference>
<dbReference type="InterPro" id="IPR029351">
    <property type="entry name" value="GAD_dom"/>
</dbReference>
<dbReference type="InterPro" id="IPR012340">
    <property type="entry name" value="NA-bd_OB-fold"/>
</dbReference>
<dbReference type="InterPro" id="IPR004365">
    <property type="entry name" value="NA-bd_OB_tRNA"/>
</dbReference>
<dbReference type="NCBIfam" id="TIGR00459">
    <property type="entry name" value="aspS_bact"/>
    <property type="match status" value="1"/>
</dbReference>
<dbReference type="NCBIfam" id="NF001750">
    <property type="entry name" value="PRK00476.1"/>
    <property type="match status" value="1"/>
</dbReference>
<dbReference type="PANTHER" id="PTHR22594:SF5">
    <property type="entry name" value="ASPARTATE--TRNA LIGASE, MITOCHONDRIAL"/>
    <property type="match status" value="1"/>
</dbReference>
<dbReference type="PANTHER" id="PTHR22594">
    <property type="entry name" value="ASPARTYL/LYSYL-TRNA SYNTHETASE"/>
    <property type="match status" value="1"/>
</dbReference>
<dbReference type="Pfam" id="PF02938">
    <property type="entry name" value="GAD"/>
    <property type="match status" value="1"/>
</dbReference>
<dbReference type="Pfam" id="PF00152">
    <property type="entry name" value="tRNA-synt_2"/>
    <property type="match status" value="1"/>
</dbReference>
<dbReference type="Pfam" id="PF01336">
    <property type="entry name" value="tRNA_anti-codon"/>
    <property type="match status" value="1"/>
</dbReference>
<dbReference type="PRINTS" id="PR01042">
    <property type="entry name" value="TRNASYNTHASP"/>
</dbReference>
<dbReference type="SUPFAM" id="SSF55681">
    <property type="entry name" value="Class II aaRS and biotin synthetases"/>
    <property type="match status" value="1"/>
</dbReference>
<dbReference type="SUPFAM" id="SSF55261">
    <property type="entry name" value="GAD domain-like"/>
    <property type="match status" value="1"/>
</dbReference>
<dbReference type="SUPFAM" id="SSF50249">
    <property type="entry name" value="Nucleic acid-binding proteins"/>
    <property type="match status" value="1"/>
</dbReference>
<dbReference type="PROSITE" id="PS50862">
    <property type="entry name" value="AA_TRNA_LIGASE_II"/>
    <property type="match status" value="1"/>
</dbReference>
<keyword id="KW-0030">Aminoacyl-tRNA synthetase</keyword>
<keyword id="KW-0067">ATP-binding</keyword>
<keyword id="KW-0963">Cytoplasm</keyword>
<keyword id="KW-0436">Ligase</keyword>
<keyword id="KW-0547">Nucleotide-binding</keyword>
<keyword id="KW-0648">Protein biosynthesis</keyword>
<keyword id="KW-1185">Reference proteome</keyword>
<feature type="chain" id="PRO_1000006748" description="Aspartate--tRNA(Asp/Asn) ligase">
    <location>
        <begin position="1"/>
        <end position="591"/>
    </location>
</feature>
<feature type="region of interest" description="Aspartate" evidence="1">
    <location>
        <begin position="199"/>
        <end position="202"/>
    </location>
</feature>
<feature type="binding site" evidence="1">
    <location>
        <position position="175"/>
    </location>
    <ligand>
        <name>L-aspartate</name>
        <dbReference type="ChEBI" id="CHEBI:29991"/>
    </ligand>
</feature>
<feature type="binding site" evidence="1">
    <location>
        <begin position="221"/>
        <end position="223"/>
    </location>
    <ligand>
        <name>ATP</name>
        <dbReference type="ChEBI" id="CHEBI:30616"/>
    </ligand>
</feature>
<feature type="binding site" evidence="1">
    <location>
        <position position="221"/>
    </location>
    <ligand>
        <name>L-aspartate</name>
        <dbReference type="ChEBI" id="CHEBI:29991"/>
    </ligand>
</feature>
<feature type="binding site" evidence="1">
    <location>
        <position position="453"/>
    </location>
    <ligand>
        <name>L-aspartate</name>
        <dbReference type="ChEBI" id="CHEBI:29991"/>
    </ligand>
</feature>
<feature type="binding site" evidence="1">
    <location>
        <position position="486"/>
    </location>
    <ligand>
        <name>ATP</name>
        <dbReference type="ChEBI" id="CHEBI:30616"/>
    </ligand>
</feature>
<feature type="binding site" evidence="1">
    <location>
        <position position="493"/>
    </location>
    <ligand>
        <name>L-aspartate</name>
        <dbReference type="ChEBI" id="CHEBI:29991"/>
    </ligand>
</feature>
<feature type="binding site" evidence="1">
    <location>
        <begin position="538"/>
        <end position="541"/>
    </location>
    <ligand>
        <name>ATP</name>
        <dbReference type="ChEBI" id="CHEBI:30616"/>
    </ligand>
</feature>
<feature type="site" description="Important for tRNA non-discrimination" evidence="1">
    <location>
        <position position="33"/>
    </location>
</feature>
<accession>Q16B16</accession>
<comment type="function">
    <text evidence="1">Aspartyl-tRNA synthetase with relaxed tRNA specificity since it is able to aspartylate not only its cognate tRNA(Asp) but also tRNA(Asn). Reaction proceeds in two steps: L-aspartate is first activated by ATP to form Asp-AMP and then transferred to the acceptor end of tRNA(Asp/Asn).</text>
</comment>
<comment type="catalytic activity">
    <reaction evidence="1">
        <text>tRNA(Asx) + L-aspartate + ATP = L-aspartyl-tRNA(Asx) + AMP + diphosphate</text>
        <dbReference type="Rhea" id="RHEA:18349"/>
        <dbReference type="Rhea" id="RHEA-COMP:9710"/>
        <dbReference type="Rhea" id="RHEA-COMP:9711"/>
        <dbReference type="ChEBI" id="CHEBI:29991"/>
        <dbReference type="ChEBI" id="CHEBI:30616"/>
        <dbReference type="ChEBI" id="CHEBI:33019"/>
        <dbReference type="ChEBI" id="CHEBI:78442"/>
        <dbReference type="ChEBI" id="CHEBI:78516"/>
        <dbReference type="ChEBI" id="CHEBI:456215"/>
        <dbReference type="EC" id="6.1.1.23"/>
    </reaction>
</comment>
<comment type="subunit">
    <text evidence="1">Homodimer.</text>
</comment>
<comment type="subcellular location">
    <subcellularLocation>
        <location evidence="1">Cytoplasm</location>
    </subcellularLocation>
</comment>
<comment type="similarity">
    <text evidence="1">Belongs to the class-II aminoacyl-tRNA synthetase family. Type 1 subfamily.</text>
</comment>
<evidence type="ECO:0000255" key="1">
    <source>
        <dbReference type="HAMAP-Rule" id="MF_00044"/>
    </source>
</evidence>
<name>SYDND_ROSDO</name>
<organism>
    <name type="scientific">Roseobacter denitrificans (strain ATCC 33942 / OCh 114)</name>
    <name type="common">Erythrobacter sp. (strain OCh 114)</name>
    <name type="synonym">Roseobacter denitrificans</name>
    <dbReference type="NCBI Taxonomy" id="375451"/>
    <lineage>
        <taxon>Bacteria</taxon>
        <taxon>Pseudomonadati</taxon>
        <taxon>Pseudomonadota</taxon>
        <taxon>Alphaproteobacteria</taxon>
        <taxon>Rhodobacterales</taxon>
        <taxon>Roseobacteraceae</taxon>
        <taxon>Roseobacter</taxon>
    </lineage>
</organism>
<proteinExistence type="inferred from homology"/>